<comment type="catalytic activity">
    <reaction>
        <text>[protein]-peptidylproline (omega=180) = [protein]-peptidylproline (omega=0)</text>
        <dbReference type="Rhea" id="RHEA:16237"/>
        <dbReference type="Rhea" id="RHEA-COMP:10747"/>
        <dbReference type="Rhea" id="RHEA-COMP:10748"/>
        <dbReference type="ChEBI" id="CHEBI:83833"/>
        <dbReference type="ChEBI" id="CHEBI:83834"/>
        <dbReference type="EC" id="5.2.1.8"/>
    </reaction>
</comment>
<comment type="subcellular location">
    <subcellularLocation>
        <location evidence="1">Cell outer membrane</location>
    </subcellularLocation>
</comment>
<comment type="similarity">
    <text evidence="4">Belongs to the PpiC/parvulin rotamase family.</text>
</comment>
<gene>
    <name type="primary">plp</name>
    <name type="ordered locus">RF_0942</name>
</gene>
<dbReference type="EC" id="5.2.1.8"/>
<dbReference type="EMBL" id="CP000053">
    <property type="protein sequence ID" value="AAY61793.1"/>
    <property type="molecule type" value="Genomic_DNA"/>
</dbReference>
<dbReference type="SMR" id="Q4UKY0"/>
<dbReference type="STRING" id="315456.RF_0942"/>
<dbReference type="KEGG" id="rfe:RF_0942"/>
<dbReference type="eggNOG" id="COG0760">
    <property type="taxonomic scope" value="Bacteria"/>
</dbReference>
<dbReference type="HOGENOM" id="CLU_034646_1_3_5"/>
<dbReference type="OrthoDB" id="14196at2"/>
<dbReference type="Proteomes" id="UP000008548">
    <property type="component" value="Chromosome"/>
</dbReference>
<dbReference type="GO" id="GO:0009279">
    <property type="term" value="C:cell outer membrane"/>
    <property type="evidence" value="ECO:0007669"/>
    <property type="project" value="UniProtKB-SubCell"/>
</dbReference>
<dbReference type="GO" id="GO:0003755">
    <property type="term" value="F:peptidyl-prolyl cis-trans isomerase activity"/>
    <property type="evidence" value="ECO:0007669"/>
    <property type="project" value="UniProtKB-KW"/>
</dbReference>
<dbReference type="Gene3D" id="3.10.50.40">
    <property type="match status" value="1"/>
</dbReference>
<dbReference type="InterPro" id="IPR046357">
    <property type="entry name" value="PPIase_dom_sf"/>
</dbReference>
<dbReference type="InterPro" id="IPR000297">
    <property type="entry name" value="PPIase_PpiC"/>
</dbReference>
<dbReference type="InterPro" id="IPR050245">
    <property type="entry name" value="PrsA_foldase"/>
</dbReference>
<dbReference type="PANTHER" id="PTHR47245:SF2">
    <property type="entry name" value="PEPTIDYL-PROLYL CIS-TRANS ISOMERASE HP_0175-RELATED"/>
    <property type="match status" value="1"/>
</dbReference>
<dbReference type="PANTHER" id="PTHR47245">
    <property type="entry name" value="PEPTIDYLPROLYL ISOMERASE"/>
    <property type="match status" value="1"/>
</dbReference>
<dbReference type="Pfam" id="PF13616">
    <property type="entry name" value="Rotamase_3"/>
    <property type="match status" value="1"/>
</dbReference>
<dbReference type="SUPFAM" id="SSF54534">
    <property type="entry name" value="FKBP-like"/>
    <property type="match status" value="1"/>
</dbReference>
<dbReference type="PROSITE" id="PS50198">
    <property type="entry name" value="PPIC_PPIASE_2"/>
    <property type="match status" value="1"/>
</dbReference>
<feature type="signal peptide" evidence="2">
    <location>
        <begin position="1"/>
        <end position="20"/>
    </location>
</feature>
<feature type="chain" id="PRO_0000289286" description="Parvulin-like PPIase">
    <location>
        <begin position="21"/>
        <end position="282"/>
    </location>
</feature>
<feature type="domain" description="PpiC" evidence="3">
    <location>
        <begin position="138"/>
        <end position="231"/>
    </location>
</feature>
<evidence type="ECO:0000250" key="1"/>
<evidence type="ECO:0000255" key="2"/>
<evidence type="ECO:0000255" key="3">
    <source>
        <dbReference type="PROSITE-ProRule" id="PRU00278"/>
    </source>
</evidence>
<evidence type="ECO:0000305" key="4"/>
<sequence length="282" mass="31350">MKKLSVIFLSVSMLSGIAFADKDKVVATYKGGEVKESQIMKEFKPQLNLQSGETIKNFDDFPPQDQEKLIKIYVNNLLLKEEVAKSNITSSKEFQEKLENAKNQLAQQELLANYIKSNITDKMFDDEYNKYVGNLKGKEQIKVAHILVKSQKEANNIKTKLSKGGNFTKLAEESSLDKASASNGGVIGYILLNQPGQLVPEFEKKAFALKVNEVSTPVKTDFGWHIIKVLEKKPVPIPTKEEAKVTIDNILAAEVLKKYISDLEAKADLKIMLPKAGSKAGS</sequence>
<name>PLP_RICFE</name>
<proteinExistence type="inferred from homology"/>
<reference key="1">
    <citation type="journal article" date="2005" name="PLoS Biol.">
        <title>The genome sequence of Rickettsia felis identifies the first putative conjugative plasmid in an obligate intracellular parasite.</title>
        <authorList>
            <person name="Ogata H."/>
            <person name="Renesto P."/>
            <person name="Audic S."/>
            <person name="Robert C."/>
            <person name="Blanc G."/>
            <person name="Fournier P.-E."/>
            <person name="Parinello H."/>
            <person name="Claverie J.-M."/>
            <person name="Raoult D."/>
        </authorList>
    </citation>
    <scope>NUCLEOTIDE SEQUENCE [LARGE SCALE GENOMIC DNA]</scope>
    <source>
        <strain>ATCC VR-1525 / URRWXCal2</strain>
    </source>
</reference>
<keyword id="KW-0998">Cell outer membrane</keyword>
<keyword id="KW-0413">Isomerase</keyword>
<keyword id="KW-0472">Membrane</keyword>
<keyword id="KW-0697">Rotamase</keyword>
<keyword id="KW-0732">Signal</keyword>
<organism>
    <name type="scientific">Rickettsia felis (strain ATCC VR-1525 / URRWXCal2)</name>
    <name type="common">Rickettsia azadi</name>
    <dbReference type="NCBI Taxonomy" id="315456"/>
    <lineage>
        <taxon>Bacteria</taxon>
        <taxon>Pseudomonadati</taxon>
        <taxon>Pseudomonadota</taxon>
        <taxon>Alphaproteobacteria</taxon>
        <taxon>Rickettsiales</taxon>
        <taxon>Rickettsiaceae</taxon>
        <taxon>Rickettsieae</taxon>
        <taxon>Rickettsia</taxon>
        <taxon>spotted fever group</taxon>
    </lineage>
</organism>
<protein>
    <recommendedName>
        <fullName>Parvulin-like PPIase</fullName>
        <ecNumber>5.2.1.8</ecNumber>
    </recommendedName>
    <alternativeName>
        <fullName>Peptidyl-prolyl cis-trans isomerase plp</fullName>
    </alternativeName>
    <alternativeName>
        <fullName>Rotamase plp</fullName>
    </alternativeName>
</protein>
<accession>Q4UKY0</accession>